<name>ASNA_ECO57</name>
<gene>
    <name evidence="2" type="primary">asnA</name>
    <name type="ordered locus">Z5245</name>
    <name type="ordered locus">ECs4686</name>
</gene>
<protein>
    <recommendedName>
        <fullName evidence="2">Aspartate--ammonia ligase</fullName>
        <ecNumber evidence="2">6.3.1.1</ecNumber>
    </recommendedName>
    <alternativeName>
        <fullName evidence="2">Asparagine synthetase A</fullName>
    </alternativeName>
</protein>
<keyword id="KW-0028">Amino-acid biosynthesis</keyword>
<keyword id="KW-0061">Asparagine biosynthesis</keyword>
<keyword id="KW-0067">ATP-binding</keyword>
<keyword id="KW-0963">Cytoplasm</keyword>
<keyword id="KW-0436">Ligase</keyword>
<keyword id="KW-0547">Nucleotide-binding</keyword>
<keyword id="KW-1185">Reference proteome</keyword>
<sequence>MKTAYIAKQRQISFVKSHFSRQLEERLGLIEVQAPILSRVGDGTQDNLSGCEKAVQVKVKALPDAQFEVVHSLAKWKRQTLGQHDFSAGEGLYTHMKALRPDEDRLSPLHSVYVDQWDWERVMGDGERQFSTLKSTVEAIWAGIKATEAAVSEEFGLAPFLPDQIHFVHSQELLSRYPDLDAKGRERAIAKDLGAVFLVGIGGKLSDGHRHDVRAPDYDDWSTPSELGHAGLNGDILVWNPVLEDAFELSSMGIRVDADTLKHQLALTGDEDRLQLEWHQALLRGEMPQTIGGGIGQSRLTMLLLQLPHIGQVQCGVWPAAVRESVPSLL</sequence>
<comment type="catalytic activity">
    <reaction evidence="2">
        <text>L-aspartate + NH4(+) + ATP = L-asparagine + AMP + diphosphate + H(+)</text>
        <dbReference type="Rhea" id="RHEA:11372"/>
        <dbReference type="ChEBI" id="CHEBI:15378"/>
        <dbReference type="ChEBI" id="CHEBI:28938"/>
        <dbReference type="ChEBI" id="CHEBI:29991"/>
        <dbReference type="ChEBI" id="CHEBI:30616"/>
        <dbReference type="ChEBI" id="CHEBI:33019"/>
        <dbReference type="ChEBI" id="CHEBI:58048"/>
        <dbReference type="ChEBI" id="CHEBI:456215"/>
        <dbReference type="EC" id="6.3.1.1"/>
    </reaction>
</comment>
<comment type="pathway">
    <text evidence="2">Amino-acid biosynthesis; L-asparagine biosynthesis; L-asparagine from L-aspartate (ammonia route): step 1/1.</text>
</comment>
<comment type="subunit">
    <text evidence="1">Homodimer.</text>
</comment>
<comment type="subcellular location">
    <subcellularLocation>
        <location evidence="2">Cytoplasm</location>
    </subcellularLocation>
</comment>
<comment type="similarity">
    <text evidence="2">Belongs to the class-II aminoacyl-tRNA synthetase family. AsnA subfamily.</text>
</comment>
<dbReference type="EC" id="6.3.1.1" evidence="2"/>
<dbReference type="EMBL" id="AE005174">
    <property type="protein sequence ID" value="AAG58947.1"/>
    <property type="molecule type" value="Genomic_DNA"/>
</dbReference>
<dbReference type="EMBL" id="BA000007">
    <property type="protein sequence ID" value="BAB38109.1"/>
    <property type="molecule type" value="Genomic_DNA"/>
</dbReference>
<dbReference type="PIR" id="F91214">
    <property type="entry name" value="F91214"/>
</dbReference>
<dbReference type="PIR" id="G86060">
    <property type="entry name" value="G86060"/>
</dbReference>
<dbReference type="RefSeq" id="NP_312713.1">
    <property type="nucleotide sequence ID" value="NC_002695.1"/>
</dbReference>
<dbReference type="RefSeq" id="WP_000845107.1">
    <property type="nucleotide sequence ID" value="NZ_VOAI01000011.1"/>
</dbReference>
<dbReference type="SMR" id="P63624"/>
<dbReference type="STRING" id="155864.Z5245"/>
<dbReference type="GeneID" id="75173978"/>
<dbReference type="GeneID" id="915329"/>
<dbReference type="KEGG" id="ece:Z5245"/>
<dbReference type="KEGG" id="ecs:ECs_4686"/>
<dbReference type="PATRIC" id="fig|386585.9.peg.4892"/>
<dbReference type="eggNOG" id="COG2502">
    <property type="taxonomic scope" value="Bacteria"/>
</dbReference>
<dbReference type="HOGENOM" id="CLU_071543_0_0_6"/>
<dbReference type="OMA" id="QSRICMF"/>
<dbReference type="UniPathway" id="UPA00134">
    <property type="reaction ID" value="UER00194"/>
</dbReference>
<dbReference type="Proteomes" id="UP000000558">
    <property type="component" value="Chromosome"/>
</dbReference>
<dbReference type="Proteomes" id="UP000002519">
    <property type="component" value="Chromosome"/>
</dbReference>
<dbReference type="GO" id="GO:0005829">
    <property type="term" value="C:cytosol"/>
    <property type="evidence" value="ECO:0007669"/>
    <property type="project" value="TreeGrafter"/>
</dbReference>
<dbReference type="GO" id="GO:0004071">
    <property type="term" value="F:aspartate-ammonia ligase activity"/>
    <property type="evidence" value="ECO:0007669"/>
    <property type="project" value="UniProtKB-UniRule"/>
</dbReference>
<dbReference type="GO" id="GO:0005524">
    <property type="term" value="F:ATP binding"/>
    <property type="evidence" value="ECO:0007669"/>
    <property type="project" value="UniProtKB-UniRule"/>
</dbReference>
<dbReference type="GO" id="GO:0070981">
    <property type="term" value="P:L-asparagine biosynthetic process"/>
    <property type="evidence" value="ECO:0007669"/>
    <property type="project" value="UniProtKB-UniRule"/>
</dbReference>
<dbReference type="CDD" id="cd00645">
    <property type="entry name" value="AsnA"/>
    <property type="match status" value="1"/>
</dbReference>
<dbReference type="FunFam" id="3.30.930.10:FF:000025">
    <property type="entry name" value="Aspartate--ammonia ligase"/>
    <property type="match status" value="1"/>
</dbReference>
<dbReference type="Gene3D" id="3.30.930.10">
    <property type="entry name" value="Bira Bifunctional Protein, Domain 2"/>
    <property type="match status" value="1"/>
</dbReference>
<dbReference type="HAMAP" id="MF_00555">
    <property type="entry name" value="AsnA"/>
    <property type="match status" value="1"/>
</dbReference>
<dbReference type="InterPro" id="IPR006195">
    <property type="entry name" value="aa-tRNA-synth_II"/>
</dbReference>
<dbReference type="InterPro" id="IPR045864">
    <property type="entry name" value="aa-tRNA-synth_II/BPL/LPL"/>
</dbReference>
<dbReference type="InterPro" id="IPR004618">
    <property type="entry name" value="AsnA"/>
</dbReference>
<dbReference type="NCBIfam" id="TIGR00669">
    <property type="entry name" value="asnA"/>
    <property type="match status" value="1"/>
</dbReference>
<dbReference type="PANTHER" id="PTHR30073">
    <property type="entry name" value="ASPARTATE--AMMONIA LIGASE"/>
    <property type="match status" value="1"/>
</dbReference>
<dbReference type="PANTHER" id="PTHR30073:SF5">
    <property type="entry name" value="ASPARTATE--AMMONIA LIGASE"/>
    <property type="match status" value="1"/>
</dbReference>
<dbReference type="Pfam" id="PF03590">
    <property type="entry name" value="AsnA"/>
    <property type="match status" value="1"/>
</dbReference>
<dbReference type="PIRSF" id="PIRSF001555">
    <property type="entry name" value="Asp_ammon_ligase"/>
    <property type="match status" value="1"/>
</dbReference>
<dbReference type="SUPFAM" id="SSF55681">
    <property type="entry name" value="Class II aaRS and biotin synthetases"/>
    <property type="match status" value="1"/>
</dbReference>
<dbReference type="PROSITE" id="PS50862">
    <property type="entry name" value="AA_TRNA_LIGASE_II"/>
    <property type="match status" value="1"/>
</dbReference>
<organism>
    <name type="scientific">Escherichia coli O157:H7</name>
    <dbReference type="NCBI Taxonomy" id="83334"/>
    <lineage>
        <taxon>Bacteria</taxon>
        <taxon>Pseudomonadati</taxon>
        <taxon>Pseudomonadota</taxon>
        <taxon>Gammaproteobacteria</taxon>
        <taxon>Enterobacterales</taxon>
        <taxon>Enterobacteriaceae</taxon>
        <taxon>Escherichia</taxon>
    </lineage>
</organism>
<reference key="1">
    <citation type="journal article" date="2001" name="Nature">
        <title>Genome sequence of enterohaemorrhagic Escherichia coli O157:H7.</title>
        <authorList>
            <person name="Perna N.T."/>
            <person name="Plunkett G. III"/>
            <person name="Burland V."/>
            <person name="Mau B."/>
            <person name="Glasner J.D."/>
            <person name="Rose D.J."/>
            <person name="Mayhew G.F."/>
            <person name="Evans P.S."/>
            <person name="Gregor J."/>
            <person name="Kirkpatrick H.A."/>
            <person name="Posfai G."/>
            <person name="Hackett J."/>
            <person name="Klink S."/>
            <person name="Boutin A."/>
            <person name="Shao Y."/>
            <person name="Miller L."/>
            <person name="Grotbeck E.J."/>
            <person name="Davis N.W."/>
            <person name="Lim A."/>
            <person name="Dimalanta E.T."/>
            <person name="Potamousis K."/>
            <person name="Apodaca J."/>
            <person name="Anantharaman T.S."/>
            <person name="Lin J."/>
            <person name="Yen G."/>
            <person name="Schwartz D.C."/>
            <person name="Welch R.A."/>
            <person name="Blattner F.R."/>
        </authorList>
    </citation>
    <scope>NUCLEOTIDE SEQUENCE [LARGE SCALE GENOMIC DNA]</scope>
    <source>
        <strain>O157:H7 / EDL933 / ATCC 700927 / EHEC</strain>
    </source>
</reference>
<reference key="2">
    <citation type="journal article" date="2001" name="DNA Res.">
        <title>Complete genome sequence of enterohemorrhagic Escherichia coli O157:H7 and genomic comparison with a laboratory strain K-12.</title>
        <authorList>
            <person name="Hayashi T."/>
            <person name="Makino K."/>
            <person name="Ohnishi M."/>
            <person name="Kurokawa K."/>
            <person name="Ishii K."/>
            <person name="Yokoyama K."/>
            <person name="Han C.-G."/>
            <person name="Ohtsubo E."/>
            <person name="Nakayama K."/>
            <person name="Murata T."/>
            <person name="Tanaka M."/>
            <person name="Tobe T."/>
            <person name="Iida T."/>
            <person name="Takami H."/>
            <person name="Honda T."/>
            <person name="Sasakawa C."/>
            <person name="Ogasawara N."/>
            <person name="Yasunaga T."/>
            <person name="Kuhara S."/>
            <person name="Shiba T."/>
            <person name="Hattori M."/>
            <person name="Shinagawa H."/>
        </authorList>
    </citation>
    <scope>NUCLEOTIDE SEQUENCE [LARGE SCALE GENOMIC DNA]</scope>
    <source>
        <strain>O157:H7 / Sakai / RIMD 0509952 / EHEC</strain>
    </source>
</reference>
<evidence type="ECO:0000250" key="1"/>
<evidence type="ECO:0000255" key="2">
    <source>
        <dbReference type="HAMAP-Rule" id="MF_00555"/>
    </source>
</evidence>
<proteinExistence type="inferred from homology"/>
<accession>P63624</accession>
<accession>Q8XAX8</accession>
<feature type="chain" id="PRO_0000195875" description="Aspartate--ammonia ligase">
    <location>
        <begin position="1"/>
        <end position="330"/>
    </location>
</feature>